<accession>B7IEQ5</accession>
<dbReference type="EC" id="2.1.1.228" evidence="1"/>
<dbReference type="EMBL" id="CP001185">
    <property type="protein sequence ID" value="ACJ74569.1"/>
    <property type="molecule type" value="Genomic_DNA"/>
</dbReference>
<dbReference type="RefSeq" id="WP_012579324.1">
    <property type="nucleotide sequence ID" value="NC_011653.1"/>
</dbReference>
<dbReference type="SMR" id="B7IEQ5"/>
<dbReference type="STRING" id="484019.THA_61"/>
<dbReference type="KEGG" id="taf:THA_61"/>
<dbReference type="eggNOG" id="COG0336">
    <property type="taxonomic scope" value="Bacteria"/>
</dbReference>
<dbReference type="HOGENOM" id="CLU_047363_0_1_0"/>
<dbReference type="OrthoDB" id="9807416at2"/>
<dbReference type="Proteomes" id="UP000002453">
    <property type="component" value="Chromosome"/>
</dbReference>
<dbReference type="GO" id="GO:0005829">
    <property type="term" value="C:cytosol"/>
    <property type="evidence" value="ECO:0007669"/>
    <property type="project" value="TreeGrafter"/>
</dbReference>
<dbReference type="GO" id="GO:0052906">
    <property type="term" value="F:tRNA (guanine(37)-N1)-methyltransferase activity"/>
    <property type="evidence" value="ECO:0007669"/>
    <property type="project" value="UniProtKB-UniRule"/>
</dbReference>
<dbReference type="GO" id="GO:0002939">
    <property type="term" value="P:tRNA N1-guanine methylation"/>
    <property type="evidence" value="ECO:0007669"/>
    <property type="project" value="TreeGrafter"/>
</dbReference>
<dbReference type="CDD" id="cd18080">
    <property type="entry name" value="TrmD-like"/>
    <property type="match status" value="1"/>
</dbReference>
<dbReference type="FunFam" id="1.10.1270.20:FF:000001">
    <property type="entry name" value="tRNA (guanine-N(1)-)-methyltransferase"/>
    <property type="match status" value="1"/>
</dbReference>
<dbReference type="FunFam" id="3.40.1280.10:FF:000001">
    <property type="entry name" value="tRNA (guanine-N(1)-)-methyltransferase"/>
    <property type="match status" value="1"/>
</dbReference>
<dbReference type="Gene3D" id="3.40.1280.10">
    <property type="match status" value="1"/>
</dbReference>
<dbReference type="Gene3D" id="1.10.1270.20">
    <property type="entry name" value="tRNA(m1g37)methyltransferase, domain 2"/>
    <property type="match status" value="1"/>
</dbReference>
<dbReference type="HAMAP" id="MF_00605">
    <property type="entry name" value="TrmD"/>
    <property type="match status" value="1"/>
</dbReference>
<dbReference type="InterPro" id="IPR029028">
    <property type="entry name" value="Alpha/beta_knot_MTases"/>
</dbReference>
<dbReference type="InterPro" id="IPR023148">
    <property type="entry name" value="tRNA_m1G_MeTrfase_C_sf"/>
</dbReference>
<dbReference type="InterPro" id="IPR002649">
    <property type="entry name" value="tRNA_m1G_MeTrfase_TrmD"/>
</dbReference>
<dbReference type="InterPro" id="IPR029026">
    <property type="entry name" value="tRNA_m1G_MTases_N"/>
</dbReference>
<dbReference type="InterPro" id="IPR016009">
    <property type="entry name" value="tRNA_MeTrfase_TRMD/TRM10"/>
</dbReference>
<dbReference type="NCBIfam" id="NF000648">
    <property type="entry name" value="PRK00026.1"/>
    <property type="match status" value="1"/>
</dbReference>
<dbReference type="NCBIfam" id="TIGR00088">
    <property type="entry name" value="trmD"/>
    <property type="match status" value="1"/>
</dbReference>
<dbReference type="PANTHER" id="PTHR46417">
    <property type="entry name" value="TRNA (GUANINE-N(1)-)-METHYLTRANSFERASE"/>
    <property type="match status" value="1"/>
</dbReference>
<dbReference type="PANTHER" id="PTHR46417:SF1">
    <property type="entry name" value="TRNA (GUANINE-N(1)-)-METHYLTRANSFERASE"/>
    <property type="match status" value="1"/>
</dbReference>
<dbReference type="Pfam" id="PF01746">
    <property type="entry name" value="tRNA_m1G_MT"/>
    <property type="match status" value="1"/>
</dbReference>
<dbReference type="PIRSF" id="PIRSF000386">
    <property type="entry name" value="tRNA_mtase"/>
    <property type="match status" value="1"/>
</dbReference>
<dbReference type="SUPFAM" id="SSF75217">
    <property type="entry name" value="alpha/beta knot"/>
    <property type="match status" value="1"/>
</dbReference>
<keyword id="KW-0963">Cytoplasm</keyword>
<keyword id="KW-0489">Methyltransferase</keyword>
<keyword id="KW-1185">Reference proteome</keyword>
<keyword id="KW-0949">S-adenosyl-L-methionine</keyword>
<keyword id="KW-0808">Transferase</keyword>
<keyword id="KW-0819">tRNA processing</keyword>
<evidence type="ECO:0000255" key="1">
    <source>
        <dbReference type="HAMAP-Rule" id="MF_00605"/>
    </source>
</evidence>
<organism>
    <name type="scientific">Thermosipho africanus (strain TCF52B)</name>
    <dbReference type="NCBI Taxonomy" id="484019"/>
    <lineage>
        <taxon>Bacteria</taxon>
        <taxon>Thermotogati</taxon>
        <taxon>Thermotogota</taxon>
        <taxon>Thermotogae</taxon>
        <taxon>Thermotogales</taxon>
        <taxon>Fervidobacteriaceae</taxon>
        <taxon>Thermosipho</taxon>
    </lineage>
</organism>
<reference key="1">
    <citation type="journal article" date="2009" name="J. Bacteriol.">
        <title>The genome of Thermosipho africanus TCF52B: lateral genetic connections to the Firmicutes and Archaea.</title>
        <authorList>
            <person name="Nesboe C.L."/>
            <person name="Bapteste E."/>
            <person name="Curtis B."/>
            <person name="Dahle H."/>
            <person name="Lopez P."/>
            <person name="Macleod D."/>
            <person name="Dlutek M."/>
            <person name="Bowman S."/>
            <person name="Zhaxybayeva O."/>
            <person name="Birkeland N.-K."/>
            <person name="Doolittle W.F."/>
        </authorList>
    </citation>
    <scope>NUCLEOTIDE SEQUENCE [LARGE SCALE GENOMIC DNA]</scope>
    <source>
        <strain>TCF52B</strain>
    </source>
</reference>
<sequence>MKISVLTIFPEMVEVIKKYGVISRAVQENKIEINIFNLRDFTSDKHRTVDDYPFGGGPGMVMKPEPFFRFYDFYVQAFGKPHTILTSPQGRTFNNDLVKELSLKENLLIICGRYEGIDERVMELVDDEISIGDYVLTGGELPAMVMIDAISRFVPGVISDESVIEESFNTGLLDHPHYTRPREFNGRKVPEVLLEGNHEKIELWRRKMSLKKTIQRRPDLFLKKEFDEVDKIALLELLRELINDVK</sequence>
<proteinExistence type="inferred from homology"/>
<comment type="function">
    <text evidence="1">Specifically methylates guanosine-37 in various tRNAs.</text>
</comment>
<comment type="catalytic activity">
    <reaction evidence="1">
        <text>guanosine(37) in tRNA + S-adenosyl-L-methionine = N(1)-methylguanosine(37) in tRNA + S-adenosyl-L-homocysteine + H(+)</text>
        <dbReference type="Rhea" id="RHEA:36899"/>
        <dbReference type="Rhea" id="RHEA-COMP:10145"/>
        <dbReference type="Rhea" id="RHEA-COMP:10147"/>
        <dbReference type="ChEBI" id="CHEBI:15378"/>
        <dbReference type="ChEBI" id="CHEBI:57856"/>
        <dbReference type="ChEBI" id="CHEBI:59789"/>
        <dbReference type="ChEBI" id="CHEBI:73542"/>
        <dbReference type="ChEBI" id="CHEBI:74269"/>
        <dbReference type="EC" id="2.1.1.228"/>
    </reaction>
</comment>
<comment type="subunit">
    <text evidence="1">Homodimer.</text>
</comment>
<comment type="subcellular location">
    <subcellularLocation>
        <location evidence="1">Cytoplasm</location>
    </subcellularLocation>
</comment>
<comment type="similarity">
    <text evidence="1">Belongs to the RNA methyltransferase TrmD family.</text>
</comment>
<name>TRMD_THEAB</name>
<protein>
    <recommendedName>
        <fullName evidence="1">tRNA (guanine-N(1)-)-methyltransferase</fullName>
        <ecNumber evidence="1">2.1.1.228</ecNumber>
    </recommendedName>
    <alternativeName>
        <fullName evidence="1">M1G-methyltransferase</fullName>
    </alternativeName>
    <alternativeName>
        <fullName evidence="1">tRNA [GM37] methyltransferase</fullName>
    </alternativeName>
</protein>
<gene>
    <name evidence="1" type="primary">trmD</name>
    <name type="ordered locus">THA_61</name>
</gene>
<feature type="chain" id="PRO_1000130218" description="tRNA (guanine-N(1)-)-methyltransferase">
    <location>
        <begin position="1"/>
        <end position="246"/>
    </location>
</feature>
<feature type="binding site" evidence="1">
    <location>
        <position position="112"/>
    </location>
    <ligand>
        <name>S-adenosyl-L-methionine</name>
        <dbReference type="ChEBI" id="CHEBI:59789"/>
    </ligand>
</feature>
<feature type="binding site" evidence="1">
    <location>
        <begin position="131"/>
        <end position="136"/>
    </location>
    <ligand>
        <name>S-adenosyl-L-methionine</name>
        <dbReference type="ChEBI" id="CHEBI:59789"/>
    </ligand>
</feature>